<comment type="function">
    <text>Gamma chains make up the fetal hemoglobin F, in combination with alpha chains.</text>
</comment>
<comment type="subunit">
    <text>Heterotetramer of two alpha chains and two gamma chains in fetal hemoglobin (Hb F).</text>
</comment>
<comment type="tissue specificity">
    <text>Red blood cells.</text>
</comment>
<comment type="similarity">
    <text evidence="1">Belongs to the globin family.</text>
</comment>
<organism>
    <name type="scientific">Papio cynocephalus</name>
    <name type="common">Yellow baboon</name>
    <dbReference type="NCBI Taxonomy" id="9556"/>
    <lineage>
        <taxon>Eukaryota</taxon>
        <taxon>Metazoa</taxon>
        <taxon>Chordata</taxon>
        <taxon>Craniata</taxon>
        <taxon>Vertebrata</taxon>
        <taxon>Euteleostomi</taxon>
        <taxon>Mammalia</taxon>
        <taxon>Eutheria</taxon>
        <taxon>Euarchontoglires</taxon>
        <taxon>Primates</taxon>
        <taxon>Haplorrhini</taxon>
        <taxon>Catarrhini</taxon>
        <taxon>Cercopithecidae</taxon>
        <taxon>Cercopithecinae</taxon>
        <taxon>Papio</taxon>
    </lineage>
</organism>
<dbReference type="PIR" id="A02416">
    <property type="entry name" value="HGBAY"/>
</dbReference>
<dbReference type="SMR" id="P68079"/>
<dbReference type="GO" id="GO:0072562">
    <property type="term" value="C:blood microparticle"/>
    <property type="evidence" value="ECO:0007669"/>
    <property type="project" value="TreeGrafter"/>
</dbReference>
<dbReference type="GO" id="GO:0031838">
    <property type="term" value="C:haptoglobin-hemoglobin complex"/>
    <property type="evidence" value="ECO:0007669"/>
    <property type="project" value="TreeGrafter"/>
</dbReference>
<dbReference type="GO" id="GO:0005833">
    <property type="term" value="C:hemoglobin complex"/>
    <property type="evidence" value="ECO:0007669"/>
    <property type="project" value="InterPro"/>
</dbReference>
<dbReference type="GO" id="GO:0031720">
    <property type="term" value="F:haptoglobin binding"/>
    <property type="evidence" value="ECO:0007669"/>
    <property type="project" value="TreeGrafter"/>
</dbReference>
<dbReference type="GO" id="GO:0020037">
    <property type="term" value="F:heme binding"/>
    <property type="evidence" value="ECO:0007669"/>
    <property type="project" value="InterPro"/>
</dbReference>
<dbReference type="GO" id="GO:0031721">
    <property type="term" value="F:hemoglobin alpha binding"/>
    <property type="evidence" value="ECO:0007669"/>
    <property type="project" value="TreeGrafter"/>
</dbReference>
<dbReference type="GO" id="GO:0046872">
    <property type="term" value="F:metal ion binding"/>
    <property type="evidence" value="ECO:0007669"/>
    <property type="project" value="UniProtKB-KW"/>
</dbReference>
<dbReference type="GO" id="GO:0043177">
    <property type="term" value="F:organic acid binding"/>
    <property type="evidence" value="ECO:0007669"/>
    <property type="project" value="TreeGrafter"/>
</dbReference>
<dbReference type="GO" id="GO:0019825">
    <property type="term" value="F:oxygen binding"/>
    <property type="evidence" value="ECO:0007669"/>
    <property type="project" value="InterPro"/>
</dbReference>
<dbReference type="GO" id="GO:0005344">
    <property type="term" value="F:oxygen carrier activity"/>
    <property type="evidence" value="ECO:0007669"/>
    <property type="project" value="UniProtKB-KW"/>
</dbReference>
<dbReference type="GO" id="GO:0004601">
    <property type="term" value="F:peroxidase activity"/>
    <property type="evidence" value="ECO:0007669"/>
    <property type="project" value="TreeGrafter"/>
</dbReference>
<dbReference type="GO" id="GO:0042744">
    <property type="term" value="P:hydrogen peroxide catabolic process"/>
    <property type="evidence" value="ECO:0007669"/>
    <property type="project" value="TreeGrafter"/>
</dbReference>
<dbReference type="CDD" id="cd08925">
    <property type="entry name" value="Hb-beta-like"/>
    <property type="match status" value="1"/>
</dbReference>
<dbReference type="FunFam" id="1.10.490.10:FF:000001">
    <property type="entry name" value="Hemoglobin subunit beta"/>
    <property type="match status" value="1"/>
</dbReference>
<dbReference type="Gene3D" id="1.10.490.10">
    <property type="entry name" value="Globins"/>
    <property type="match status" value="1"/>
</dbReference>
<dbReference type="InterPro" id="IPR000971">
    <property type="entry name" value="Globin"/>
</dbReference>
<dbReference type="InterPro" id="IPR009050">
    <property type="entry name" value="Globin-like_sf"/>
</dbReference>
<dbReference type="InterPro" id="IPR012292">
    <property type="entry name" value="Globin/Proto"/>
</dbReference>
<dbReference type="InterPro" id="IPR002337">
    <property type="entry name" value="Hemoglobin_b"/>
</dbReference>
<dbReference type="InterPro" id="IPR050056">
    <property type="entry name" value="Hemoglobin_oxygen_transport"/>
</dbReference>
<dbReference type="PANTHER" id="PTHR11442">
    <property type="entry name" value="HEMOGLOBIN FAMILY MEMBER"/>
    <property type="match status" value="1"/>
</dbReference>
<dbReference type="PANTHER" id="PTHR11442:SF52">
    <property type="entry name" value="HEMOGLOBIN SUBUNIT GAMMA-1"/>
    <property type="match status" value="1"/>
</dbReference>
<dbReference type="Pfam" id="PF00042">
    <property type="entry name" value="Globin"/>
    <property type="match status" value="1"/>
</dbReference>
<dbReference type="PRINTS" id="PR00814">
    <property type="entry name" value="BETAHAEM"/>
</dbReference>
<dbReference type="SUPFAM" id="SSF46458">
    <property type="entry name" value="Globin-like"/>
    <property type="match status" value="1"/>
</dbReference>
<dbReference type="PROSITE" id="PS01033">
    <property type="entry name" value="GLOBIN"/>
    <property type="match status" value="1"/>
</dbReference>
<evidence type="ECO:0000255" key="1">
    <source>
        <dbReference type="PROSITE-ProRule" id="PRU00238"/>
    </source>
</evidence>
<evidence type="ECO:0000269" key="2">
    <source>
    </source>
</evidence>
<accession>P68079</accession>
<accession>P02098</accession>
<protein>
    <recommendedName>
        <fullName>Hemoglobin subunit gamma</fullName>
    </recommendedName>
    <alternativeName>
        <fullName>Gamma-globin</fullName>
    </alternativeName>
    <alternativeName>
        <fullName>Hemoglobin gamma chain</fullName>
    </alternativeName>
</protein>
<keyword id="KW-0903">Direct protein sequencing</keyword>
<keyword id="KW-0349">Heme</keyword>
<keyword id="KW-0408">Iron</keyword>
<keyword id="KW-0479">Metal-binding</keyword>
<keyword id="KW-0561">Oxygen transport</keyword>
<keyword id="KW-0813">Transport</keyword>
<sequence length="147" mass="16101">MGHFTEEDKATITSLWGKVNVEDAGGETLGRLLVVYPWTQRFFDSFGNLSSASAIMGNPKVKAHGKKVLTSLGDAIKNLDDLKGTFAQLSELHCDKLHVDPENFRLLGNVLVTVLAIHFGKEFTPEVQASWQKMVAGVASALSSRYH</sequence>
<reference key="1">
    <citation type="journal article" date="1979" name="Hemoglobin">
        <title>Complete sequence of the gamma chain from the fetal hemoglobin of the baboon, Papio cynocephalus.</title>
        <authorList>
            <person name="Nute P.E."/>
            <person name="Mahoney W.C."/>
        </authorList>
    </citation>
    <scope>PROTEIN SEQUENCE OF 2-147</scope>
    <scope>VARIANT VAL-76</scope>
</reference>
<feature type="initiator methionine" description="Removed" evidence="2">
    <location>
        <position position="1"/>
    </location>
</feature>
<feature type="chain" id="PRO_0000053264" description="Hemoglobin subunit gamma">
    <location>
        <begin position="2"/>
        <end position="147"/>
    </location>
</feature>
<feature type="domain" description="Globin" evidence="1">
    <location>
        <begin position="3"/>
        <end position="147"/>
    </location>
</feature>
<feature type="binding site" description="distal binding residue" evidence="1">
    <location>
        <position position="64"/>
    </location>
    <ligand>
        <name>heme b</name>
        <dbReference type="ChEBI" id="CHEBI:60344"/>
    </ligand>
    <ligandPart>
        <name>Fe</name>
        <dbReference type="ChEBI" id="CHEBI:18248"/>
    </ligandPart>
</feature>
<feature type="binding site" description="proximal binding residue" evidence="1">
    <location>
        <position position="93"/>
    </location>
    <ligand>
        <name>heme b</name>
        <dbReference type="ChEBI" id="CHEBI:60344"/>
    </ligand>
    <ligandPart>
        <name>Fe</name>
        <dbReference type="ChEBI" id="CHEBI:18248"/>
    </ligandPart>
</feature>
<feature type="sequence variant" evidence="2">
    <original>I</original>
    <variation>V</variation>
    <location>
        <position position="76"/>
    </location>
</feature>
<proteinExistence type="evidence at protein level"/>
<name>HBG_PAPCY</name>
<gene>
    <name type="primary">HBG</name>
</gene>